<name>NM111_ASPFU</name>
<sequence>MDLNGETSTKRKRSSVAAPAERPAKHLKPGNSTLTPGDATPANGTVYNVEDEEDTGRVMPIGPAQADSPEWQATIEKVVKSVVSIHFCQTCSFDTDLSMSSQATGFVVDAERGYILTNRHVVCAGPFWGYCIFDNHEECDVHPVYRDPVHDFGILKFNPKAIRYMELTELKLRPEAARVGCEIRVVGNDAGEKLSILSGVISRLDRNAPEYGDGYCDFNTNYIQAAAAASGGSSGSPVVNIDGHAIALQAGGRADGAATDYFLPLDRPLRALECIRRGEPVTRGTIQTQWILKPFDECRRLGLTPEWEAAVRKASPHETSMLVAEIILPEGPADGKLEEGDVLLQVNGELLTQFIRLDDILDSSVGKTVRLLVQRGGQNVEVECEVGDLHAITPDRFVTVAGGTFHNLSYQQARLYAIAARGVYVCEAAGSFKLENTLSGWIIDAVDKRPTRNLDEFIEVMKTIPDRARVVISYRHIRDLHTRGTSIVYIDRHWHPKMRMAIRNDETGLWDFSDLADPVPAETPVPRKADFIQLDGVSQPAVADIVRSFVRVSCTMPLKLDGYPQAKKTGFGLVIDAGKGLVVVSRAIVPYDLCDINITVADSIIVVAKVIFMHPLQNYTIIQYDPSLVQAPVQSAELSTEYIKQGQETIFVGFNQNFRIVVAKTAVTDITTVSIPANASAPRYRAINLDAITVDTGLSGQCTNGVLIGEDGVVQALWLNYLGERTPNSHKDVEYHLGFATPALLPVTSKIQQGIIPKLRILNMESYVVQMSQARIMGVSEEWIQKVAQANPSRHQLFMVRKVDCPPPQFTSNADSLQEGDIILTLDGQLITRVSELDKMYEKEVLDALIVRNGQEIHLKLPTVPTEDLETDRAVVFCGAVLQKPHHAVRQQISKLHSEVYVSARSRGSPAYQYGLAPTNFITAVNGVSTPNLDSFVREVSMIPDNTYFRLRAVTFDNVPWVVTMKKNDHYFPMSEYVKDPSQPLGWRTVSHERDRHKDGITPDAANLNPDAMDEVYEEVSDVEPEVD</sequence>
<reference key="1">
    <citation type="journal article" date="2005" name="Nature">
        <title>Genomic sequence of the pathogenic and allergenic filamentous fungus Aspergillus fumigatus.</title>
        <authorList>
            <person name="Nierman W.C."/>
            <person name="Pain A."/>
            <person name="Anderson M.J."/>
            <person name="Wortman J.R."/>
            <person name="Kim H.S."/>
            <person name="Arroyo J."/>
            <person name="Berriman M."/>
            <person name="Abe K."/>
            <person name="Archer D.B."/>
            <person name="Bermejo C."/>
            <person name="Bennett J.W."/>
            <person name="Bowyer P."/>
            <person name="Chen D."/>
            <person name="Collins M."/>
            <person name="Coulsen R."/>
            <person name="Davies R."/>
            <person name="Dyer P.S."/>
            <person name="Farman M.L."/>
            <person name="Fedorova N."/>
            <person name="Fedorova N.D."/>
            <person name="Feldblyum T.V."/>
            <person name="Fischer R."/>
            <person name="Fosker N."/>
            <person name="Fraser A."/>
            <person name="Garcia J.L."/>
            <person name="Garcia M.J."/>
            <person name="Goble A."/>
            <person name="Goldman G.H."/>
            <person name="Gomi K."/>
            <person name="Griffith-Jones S."/>
            <person name="Gwilliam R."/>
            <person name="Haas B.J."/>
            <person name="Haas H."/>
            <person name="Harris D.E."/>
            <person name="Horiuchi H."/>
            <person name="Huang J."/>
            <person name="Humphray S."/>
            <person name="Jimenez J."/>
            <person name="Keller N."/>
            <person name="Khouri H."/>
            <person name="Kitamoto K."/>
            <person name="Kobayashi T."/>
            <person name="Konzack S."/>
            <person name="Kulkarni R."/>
            <person name="Kumagai T."/>
            <person name="Lafton A."/>
            <person name="Latge J.-P."/>
            <person name="Li W."/>
            <person name="Lord A."/>
            <person name="Lu C."/>
            <person name="Majoros W.H."/>
            <person name="May G.S."/>
            <person name="Miller B.L."/>
            <person name="Mohamoud Y."/>
            <person name="Molina M."/>
            <person name="Monod M."/>
            <person name="Mouyna I."/>
            <person name="Mulligan S."/>
            <person name="Murphy L.D."/>
            <person name="O'Neil S."/>
            <person name="Paulsen I."/>
            <person name="Penalva M.A."/>
            <person name="Pertea M."/>
            <person name="Price C."/>
            <person name="Pritchard B.L."/>
            <person name="Quail M.A."/>
            <person name="Rabbinowitsch E."/>
            <person name="Rawlins N."/>
            <person name="Rajandream M.A."/>
            <person name="Reichard U."/>
            <person name="Renauld H."/>
            <person name="Robson G.D."/>
            <person name="Rodriguez de Cordoba S."/>
            <person name="Rodriguez-Pena J.M."/>
            <person name="Ronning C.M."/>
            <person name="Rutter S."/>
            <person name="Salzberg S.L."/>
            <person name="Sanchez M."/>
            <person name="Sanchez-Ferrero J.C."/>
            <person name="Saunders D."/>
            <person name="Seeger K."/>
            <person name="Squares R."/>
            <person name="Squares S."/>
            <person name="Takeuchi M."/>
            <person name="Tekaia F."/>
            <person name="Turner G."/>
            <person name="Vazquez de Aldana C.R."/>
            <person name="Weidman J."/>
            <person name="White O."/>
            <person name="Woodward J.R."/>
            <person name="Yu J.-H."/>
            <person name="Fraser C.M."/>
            <person name="Galagan J.E."/>
            <person name="Asai K."/>
            <person name="Machida M."/>
            <person name="Hall N."/>
            <person name="Barrell B.G."/>
            <person name="Denning D.W."/>
        </authorList>
    </citation>
    <scope>NUCLEOTIDE SEQUENCE [LARGE SCALE GENOMIC DNA]</scope>
    <source>
        <strain>ATCC MYA-4609 / CBS 101355 / FGSC A1100 / Af293</strain>
    </source>
</reference>
<protein>
    <recommendedName>
        <fullName>Pro-apoptotic serine protease nma111</fullName>
        <ecNumber>3.4.21.-</ecNumber>
    </recommendedName>
</protein>
<accession>Q4WLG1</accession>
<organism>
    <name type="scientific">Aspergillus fumigatus (strain ATCC MYA-4609 / CBS 101355 / FGSC A1100 / Af293)</name>
    <name type="common">Neosartorya fumigata</name>
    <dbReference type="NCBI Taxonomy" id="330879"/>
    <lineage>
        <taxon>Eukaryota</taxon>
        <taxon>Fungi</taxon>
        <taxon>Dikarya</taxon>
        <taxon>Ascomycota</taxon>
        <taxon>Pezizomycotina</taxon>
        <taxon>Eurotiomycetes</taxon>
        <taxon>Eurotiomycetidae</taxon>
        <taxon>Eurotiales</taxon>
        <taxon>Aspergillaceae</taxon>
        <taxon>Aspergillus</taxon>
        <taxon>Aspergillus subgen. Fumigati</taxon>
    </lineage>
</organism>
<keyword id="KW-0053">Apoptosis</keyword>
<keyword id="KW-0378">Hydrolase</keyword>
<keyword id="KW-0539">Nucleus</keyword>
<keyword id="KW-0645">Protease</keyword>
<keyword id="KW-1185">Reference proteome</keyword>
<keyword id="KW-0677">Repeat</keyword>
<keyword id="KW-0720">Serine protease</keyword>
<evidence type="ECO:0000250" key="1"/>
<evidence type="ECO:0000255" key="2"/>
<evidence type="ECO:0000256" key="3">
    <source>
        <dbReference type="SAM" id="MobiDB-lite"/>
    </source>
</evidence>
<evidence type="ECO:0000305" key="4"/>
<comment type="function">
    <text evidence="1">Nuclear serine protease which mediates apoptosis.</text>
</comment>
<comment type="subcellular location">
    <subcellularLocation>
        <location evidence="1">Nucleus</location>
    </subcellularLocation>
</comment>
<comment type="similarity">
    <text evidence="4">Belongs to the peptidase S1C family.</text>
</comment>
<proteinExistence type="inferred from homology"/>
<feature type="chain" id="PRO_0000320346" description="Pro-apoptotic serine protease nma111">
    <location>
        <begin position="1"/>
        <end position="1028"/>
    </location>
</feature>
<feature type="domain" description="PDZ 1">
    <location>
        <begin position="289"/>
        <end position="374"/>
    </location>
</feature>
<feature type="domain" description="PDZ 2">
    <location>
        <begin position="876"/>
        <end position="957"/>
    </location>
</feature>
<feature type="region of interest" description="Disordered" evidence="3">
    <location>
        <begin position="1"/>
        <end position="46"/>
    </location>
</feature>
<feature type="region of interest" description="Serine protease">
    <location>
        <begin position="82"/>
        <end position="266"/>
    </location>
</feature>
<feature type="region of interest" description="Disordered" evidence="3">
    <location>
        <begin position="991"/>
        <end position="1028"/>
    </location>
</feature>
<feature type="compositionally biased region" description="Basic and acidic residues" evidence="3">
    <location>
        <begin position="991"/>
        <end position="1001"/>
    </location>
</feature>
<feature type="compositionally biased region" description="Acidic residues" evidence="3">
    <location>
        <begin position="1012"/>
        <end position="1028"/>
    </location>
</feature>
<feature type="active site" description="Charge relay system" evidence="2">
    <location>
        <position position="120"/>
    </location>
</feature>
<feature type="active site" description="Charge relay system" evidence="2">
    <location>
        <position position="151"/>
    </location>
</feature>
<feature type="active site" description="Charge relay system" evidence="2">
    <location>
        <position position="233"/>
    </location>
</feature>
<gene>
    <name type="primary">nma111</name>
    <name type="ORF">AFUA_6G13650</name>
</gene>
<dbReference type="EC" id="3.4.21.-"/>
<dbReference type="EMBL" id="AAHF01000006">
    <property type="protein sequence ID" value="EAL89203.1"/>
    <property type="molecule type" value="Genomic_DNA"/>
</dbReference>
<dbReference type="RefSeq" id="XP_751241.1">
    <property type="nucleotide sequence ID" value="XM_746148.1"/>
</dbReference>
<dbReference type="SMR" id="Q4WLG1"/>
<dbReference type="FunCoup" id="Q4WLG1">
    <property type="interactions" value="142"/>
</dbReference>
<dbReference type="STRING" id="330879.Q4WLG1"/>
<dbReference type="MEROPS" id="S01.434"/>
<dbReference type="EnsemblFungi" id="EAL89203">
    <property type="protein sequence ID" value="EAL89203"/>
    <property type="gene ID" value="AFUA_6G13650"/>
</dbReference>
<dbReference type="GeneID" id="3508556"/>
<dbReference type="KEGG" id="afm:AFUA_6G13650"/>
<dbReference type="eggNOG" id="KOG1421">
    <property type="taxonomic scope" value="Eukaryota"/>
</dbReference>
<dbReference type="HOGENOM" id="CLU_003212_0_0_1"/>
<dbReference type="InParanoid" id="Q4WLG1"/>
<dbReference type="OMA" id="FWGHCVF"/>
<dbReference type="OrthoDB" id="4217619at2759"/>
<dbReference type="Proteomes" id="UP000002530">
    <property type="component" value="Chromosome 6"/>
</dbReference>
<dbReference type="GO" id="GO:0005634">
    <property type="term" value="C:nucleus"/>
    <property type="evidence" value="ECO:0000318"/>
    <property type="project" value="GO_Central"/>
</dbReference>
<dbReference type="GO" id="GO:0004252">
    <property type="term" value="F:serine-type endopeptidase activity"/>
    <property type="evidence" value="ECO:0000318"/>
    <property type="project" value="GO_Central"/>
</dbReference>
<dbReference type="GO" id="GO:0006915">
    <property type="term" value="P:apoptotic process"/>
    <property type="evidence" value="ECO:0007669"/>
    <property type="project" value="UniProtKB-KW"/>
</dbReference>
<dbReference type="GO" id="GO:0043065">
    <property type="term" value="P:positive regulation of apoptotic process"/>
    <property type="evidence" value="ECO:0000318"/>
    <property type="project" value="GO_Central"/>
</dbReference>
<dbReference type="GO" id="GO:0006508">
    <property type="term" value="P:proteolysis"/>
    <property type="evidence" value="ECO:0007669"/>
    <property type="project" value="UniProtKB-KW"/>
</dbReference>
<dbReference type="CDD" id="cd06786">
    <property type="entry name" value="cpPDZ1_ScNma111-like"/>
    <property type="match status" value="1"/>
</dbReference>
<dbReference type="CDD" id="cd10827">
    <property type="entry name" value="cpPDZ3_ScNma111-like"/>
    <property type="match status" value="1"/>
</dbReference>
<dbReference type="CDD" id="cd06719">
    <property type="entry name" value="PDZ2-4_Nma111p-like"/>
    <property type="match status" value="2"/>
</dbReference>
<dbReference type="Gene3D" id="2.30.42.10">
    <property type="match status" value="1"/>
</dbReference>
<dbReference type="Gene3D" id="2.40.10.120">
    <property type="match status" value="1"/>
</dbReference>
<dbReference type="InterPro" id="IPR001478">
    <property type="entry name" value="PDZ"/>
</dbReference>
<dbReference type="InterPro" id="IPR025926">
    <property type="entry name" value="PDZ-like_dom"/>
</dbReference>
<dbReference type="InterPro" id="IPR041489">
    <property type="entry name" value="PDZ_6"/>
</dbReference>
<dbReference type="InterPro" id="IPR036034">
    <property type="entry name" value="PDZ_sf"/>
</dbReference>
<dbReference type="InterPro" id="IPR009003">
    <property type="entry name" value="Peptidase_S1_PA"/>
</dbReference>
<dbReference type="InterPro" id="IPR001940">
    <property type="entry name" value="Peptidase_S1C"/>
</dbReference>
<dbReference type="PANTHER" id="PTHR46366">
    <property type="entry name" value="PRO-APOPTOTIC SERINE PROTEASE NMA111"/>
    <property type="match status" value="1"/>
</dbReference>
<dbReference type="PANTHER" id="PTHR46366:SF8">
    <property type="entry name" value="PRO-APOPTOTIC SERINE PROTEASE NMA111"/>
    <property type="match status" value="1"/>
</dbReference>
<dbReference type="Pfam" id="PF12812">
    <property type="entry name" value="PDZ_1"/>
    <property type="match status" value="2"/>
</dbReference>
<dbReference type="Pfam" id="PF17820">
    <property type="entry name" value="PDZ_6"/>
    <property type="match status" value="1"/>
</dbReference>
<dbReference type="Pfam" id="PF13365">
    <property type="entry name" value="Trypsin_2"/>
    <property type="match status" value="1"/>
</dbReference>
<dbReference type="PRINTS" id="PR00834">
    <property type="entry name" value="PROTEASES2C"/>
</dbReference>
<dbReference type="SMART" id="SM00228">
    <property type="entry name" value="PDZ"/>
    <property type="match status" value="2"/>
</dbReference>
<dbReference type="SUPFAM" id="SSF50156">
    <property type="entry name" value="PDZ domain-like"/>
    <property type="match status" value="3"/>
</dbReference>
<dbReference type="SUPFAM" id="SSF50494">
    <property type="entry name" value="Trypsin-like serine proteases"/>
    <property type="match status" value="2"/>
</dbReference>